<evidence type="ECO:0000255" key="1">
    <source>
        <dbReference type="HAMAP-Rule" id="MF_00153"/>
    </source>
</evidence>
<keyword id="KW-0386">Hypusine biosynthesis</keyword>
<keyword id="KW-0520">NAD</keyword>
<keyword id="KW-0808">Transferase</keyword>
<gene>
    <name evidence="1" type="primary">dys</name>
    <name type="ordered locus">TON_0701</name>
</gene>
<accession>B6YVB1</accession>
<organism>
    <name type="scientific">Thermococcus onnurineus (strain NA1)</name>
    <dbReference type="NCBI Taxonomy" id="523850"/>
    <lineage>
        <taxon>Archaea</taxon>
        <taxon>Methanobacteriati</taxon>
        <taxon>Methanobacteriota</taxon>
        <taxon>Thermococci</taxon>
        <taxon>Thermococcales</taxon>
        <taxon>Thermococcaceae</taxon>
        <taxon>Thermococcus</taxon>
    </lineage>
</organism>
<sequence length="335" mass="38173">MTEPKDIVLKESEEIEGTPIEGPWLDEVRILEEVIDYYHRIGFQATHLGRAIEIWKKVEEKRASGEEVRVFLGYTSNIVSSGLRELIAWLVKEGKVDVIVTTAGGVEEDFIKALKPFILGDWYVNDAEMREKGINRIGNIFVPNDRYIEFEKYMIPFFERVLEMEKERGKPLTASEFIYEMGRFMDEKLGKEKERSIIYWAYKRNVPIFCPAITDGSIGDMLYFFKEERGDRELIIDVANDIVKLNNLAVTAKETASIILGGSLPKHAIINANLFRGGTDYAIYVTTAIPWDGSLSGAPPSEGVSWGKIRAKADYVEIWADATLVFPVLVWKVMR</sequence>
<reference key="1">
    <citation type="journal article" date="2008" name="J. Bacteriol.">
        <title>The complete genome sequence of Thermococcus onnurineus NA1 reveals a mixed heterotrophic and carboxydotrophic metabolism.</title>
        <authorList>
            <person name="Lee H.S."/>
            <person name="Kang S.G."/>
            <person name="Bae S.S."/>
            <person name="Lim J.K."/>
            <person name="Cho Y."/>
            <person name="Kim Y.J."/>
            <person name="Jeon J.H."/>
            <person name="Cha S.-S."/>
            <person name="Kwon K.K."/>
            <person name="Kim H.-T."/>
            <person name="Park C.-J."/>
            <person name="Lee H.-W."/>
            <person name="Kim S.I."/>
            <person name="Chun J."/>
            <person name="Colwell R.R."/>
            <person name="Kim S.-J."/>
            <person name="Lee J.-H."/>
        </authorList>
    </citation>
    <scope>NUCLEOTIDE SEQUENCE [LARGE SCALE GENOMIC DNA]</scope>
    <source>
        <strain>NA1</strain>
    </source>
</reference>
<proteinExistence type="inferred from homology"/>
<dbReference type="EC" id="2.5.1.46" evidence="1"/>
<dbReference type="EMBL" id="CP000855">
    <property type="protein sequence ID" value="ACJ16189.1"/>
    <property type="molecule type" value="Genomic_DNA"/>
</dbReference>
<dbReference type="RefSeq" id="WP_012571661.1">
    <property type="nucleotide sequence ID" value="NC_011529.1"/>
</dbReference>
<dbReference type="SMR" id="B6YVB1"/>
<dbReference type="STRING" id="523850.TON_0701"/>
<dbReference type="GeneID" id="7017002"/>
<dbReference type="KEGG" id="ton:TON_0701"/>
<dbReference type="PATRIC" id="fig|523850.10.peg.704"/>
<dbReference type="eggNOG" id="arCOG04142">
    <property type="taxonomic scope" value="Archaea"/>
</dbReference>
<dbReference type="HOGENOM" id="CLU_039781_0_0_2"/>
<dbReference type="OrthoDB" id="17730at2157"/>
<dbReference type="UniPathway" id="UPA00354"/>
<dbReference type="Proteomes" id="UP000002727">
    <property type="component" value="Chromosome"/>
</dbReference>
<dbReference type="GO" id="GO:0005737">
    <property type="term" value="C:cytoplasm"/>
    <property type="evidence" value="ECO:0007669"/>
    <property type="project" value="TreeGrafter"/>
</dbReference>
<dbReference type="GO" id="GO:0034038">
    <property type="term" value="F:deoxyhypusine synthase activity"/>
    <property type="evidence" value="ECO:0007669"/>
    <property type="project" value="UniProtKB-UniRule"/>
</dbReference>
<dbReference type="FunFam" id="3.40.910.10:FF:000004">
    <property type="entry name" value="Probable deoxyhypusine synthase"/>
    <property type="match status" value="1"/>
</dbReference>
<dbReference type="Gene3D" id="3.40.910.10">
    <property type="entry name" value="Deoxyhypusine synthase"/>
    <property type="match status" value="1"/>
</dbReference>
<dbReference type="HAMAP" id="MF_00153">
    <property type="entry name" value="DHS"/>
    <property type="match status" value="1"/>
</dbReference>
<dbReference type="InterPro" id="IPR022899">
    <property type="entry name" value="Deoxyhypus_synthase_arc"/>
</dbReference>
<dbReference type="InterPro" id="IPR002773">
    <property type="entry name" value="Deoxyhypusine_synthase"/>
</dbReference>
<dbReference type="InterPro" id="IPR036982">
    <property type="entry name" value="Deoxyhypusine_synthase_sf"/>
</dbReference>
<dbReference type="InterPro" id="IPR029035">
    <property type="entry name" value="DHS-like_NAD/FAD-binding_dom"/>
</dbReference>
<dbReference type="NCBIfam" id="TIGR00321">
    <property type="entry name" value="dhys"/>
    <property type="match status" value="1"/>
</dbReference>
<dbReference type="NCBIfam" id="NF003052">
    <property type="entry name" value="PRK03971.1"/>
    <property type="match status" value="1"/>
</dbReference>
<dbReference type="PANTHER" id="PTHR11703">
    <property type="entry name" value="DEOXYHYPUSINE SYNTHASE"/>
    <property type="match status" value="1"/>
</dbReference>
<dbReference type="PANTHER" id="PTHR11703:SF0">
    <property type="entry name" value="DEOXYHYPUSINE SYNTHASE"/>
    <property type="match status" value="1"/>
</dbReference>
<dbReference type="Pfam" id="PF01916">
    <property type="entry name" value="DS"/>
    <property type="match status" value="1"/>
</dbReference>
<dbReference type="SUPFAM" id="SSF52467">
    <property type="entry name" value="DHS-like NAD/FAD-binding domain"/>
    <property type="match status" value="1"/>
</dbReference>
<comment type="function">
    <text evidence="1">Catalyzes the NAD-dependent oxidative cleavage of spermidine and the subsequent transfer of the butylamine moiety of spermidine to the epsilon-amino group of a specific lysine residue of the eIF-5A precursor protein to form the intermediate deoxyhypusine residue.</text>
</comment>
<comment type="catalytic activity">
    <reaction evidence="1">
        <text>[eIF5A protein]-L-lysine + spermidine = [eIF5A protein]-deoxyhypusine + propane-1,3-diamine</text>
        <dbReference type="Rhea" id="RHEA:33299"/>
        <dbReference type="Rhea" id="RHEA-COMP:10143"/>
        <dbReference type="Rhea" id="RHEA-COMP:10144"/>
        <dbReference type="ChEBI" id="CHEBI:29969"/>
        <dbReference type="ChEBI" id="CHEBI:57484"/>
        <dbReference type="ChEBI" id="CHEBI:57834"/>
        <dbReference type="ChEBI" id="CHEBI:82657"/>
        <dbReference type="EC" id="2.5.1.46"/>
    </reaction>
</comment>
<comment type="cofactor">
    <cofactor evidence="1">
        <name>NAD(+)</name>
        <dbReference type="ChEBI" id="CHEBI:57540"/>
    </cofactor>
</comment>
<comment type="pathway">
    <text evidence="1">Protein modification; eIF5A hypusination.</text>
</comment>
<comment type="similarity">
    <text evidence="1">Belongs to the deoxyhypusine synthase family.</text>
</comment>
<feature type="chain" id="PRO_1000096915" description="Probable deoxyhypusine synthase">
    <location>
        <begin position="1"/>
        <end position="335"/>
    </location>
</feature>
<feature type="active site" description="Nucleophile" evidence="1">
    <location>
        <position position="308"/>
    </location>
</feature>
<protein>
    <recommendedName>
        <fullName evidence="1">Probable deoxyhypusine synthase</fullName>
        <shortName evidence="1">DHS</shortName>
        <ecNumber evidence="1">2.5.1.46</ecNumber>
    </recommendedName>
</protein>
<name>DHYS_THEON</name>